<organism>
    <name type="scientific">Sordaria macrospora (strain ATCC MYA-333 / DSM 997 / K(L3346) / K-hell)</name>
    <dbReference type="NCBI Taxonomy" id="771870"/>
    <lineage>
        <taxon>Eukaryota</taxon>
        <taxon>Fungi</taxon>
        <taxon>Dikarya</taxon>
        <taxon>Ascomycota</taxon>
        <taxon>Pezizomycotina</taxon>
        <taxon>Sordariomycetes</taxon>
        <taxon>Sordariomycetidae</taxon>
        <taxon>Sordariales</taxon>
        <taxon>Sordariaceae</taxon>
        <taxon>Sordaria</taxon>
    </lineage>
</organism>
<comment type="function">
    <text evidence="1">May be involved in vacuolar sorting and osmoregulation.</text>
</comment>
<comment type="cofactor">
    <cofactor evidence="2">
        <name>Zn(2+)</name>
        <dbReference type="ChEBI" id="CHEBI:29105"/>
    </cofactor>
    <text evidence="2">Binds 2 Zn(2+) ions per subunit.</text>
</comment>
<comment type="subcellular location">
    <subcellularLocation>
        <location evidence="1">Vacuole membrane</location>
        <topology evidence="3">Multi-pass membrane protein</topology>
    </subcellularLocation>
</comment>
<comment type="similarity">
    <text evidence="6">Belongs to the peptidase M28 family.</text>
</comment>
<feature type="chain" id="PRO_0000411743" description="Vacuolar membrane protease">
    <location>
        <begin position="1"/>
        <end position="1040"/>
    </location>
</feature>
<feature type="topological domain" description="Cytoplasmic" evidence="1">
    <location>
        <begin position="1"/>
        <end position="9"/>
    </location>
</feature>
<feature type="transmembrane region" description="Helical; Name=1" evidence="3">
    <location>
        <begin position="10"/>
        <end position="30"/>
    </location>
</feature>
<feature type="topological domain" description="Vacuolar" evidence="1">
    <location>
        <begin position="31"/>
        <end position="405"/>
    </location>
</feature>
<feature type="transmembrane region" description="Helical; Name=2" evidence="3">
    <location>
        <begin position="406"/>
        <end position="426"/>
    </location>
</feature>
<feature type="topological domain" description="Cytoplasmic" evidence="1">
    <location>
        <begin position="427"/>
        <end position="436"/>
    </location>
</feature>
<feature type="transmembrane region" description="Helical; Name=3" evidence="1">
    <location>
        <begin position="437"/>
        <end position="456"/>
    </location>
</feature>
<feature type="topological domain" description="Vacuolar" evidence="1">
    <location>
        <begin position="457"/>
        <end position="462"/>
    </location>
</feature>
<feature type="transmembrane region" description="Helical; Name=4" evidence="3">
    <location>
        <begin position="463"/>
        <end position="483"/>
    </location>
</feature>
<feature type="topological domain" description="Cytoplasmic" evidence="1">
    <location>
        <begin position="484"/>
        <end position="490"/>
    </location>
</feature>
<feature type="transmembrane region" description="Helical; Name=5" evidence="3">
    <location>
        <begin position="491"/>
        <end position="511"/>
    </location>
</feature>
<feature type="topological domain" description="Vacuolar" evidence="1">
    <location>
        <begin position="512"/>
        <end position="521"/>
    </location>
</feature>
<feature type="transmembrane region" description="Helical; Name=6" evidence="3">
    <location>
        <begin position="522"/>
        <end position="542"/>
    </location>
</feature>
<feature type="topological domain" description="Cytoplasmic" evidence="1">
    <location>
        <begin position="543"/>
        <end position="715"/>
    </location>
</feature>
<feature type="transmembrane region" description="Helical; Name=7" evidence="3">
    <location>
        <begin position="716"/>
        <end position="736"/>
    </location>
</feature>
<feature type="topological domain" description="Vacuolar" evidence="1">
    <location>
        <begin position="737"/>
        <end position="758"/>
    </location>
</feature>
<feature type="transmembrane region" description="Helical; Name=8" evidence="3">
    <location>
        <begin position="759"/>
        <end position="779"/>
    </location>
</feature>
<feature type="topological domain" description="Cytoplasmic" evidence="1">
    <location>
        <begin position="780"/>
        <end position="785"/>
    </location>
</feature>
<feature type="transmembrane region" description="Helical; Name=9" evidence="3">
    <location>
        <begin position="786"/>
        <end position="806"/>
    </location>
</feature>
<feature type="topological domain" description="Vacuolar" evidence="1">
    <location>
        <begin position="807"/>
        <end position="1040"/>
    </location>
</feature>
<feature type="region of interest" description="Disordered" evidence="5">
    <location>
        <begin position="563"/>
        <end position="680"/>
    </location>
</feature>
<feature type="compositionally biased region" description="Low complexity" evidence="5">
    <location>
        <begin position="577"/>
        <end position="594"/>
    </location>
</feature>
<feature type="compositionally biased region" description="Low complexity" evidence="5">
    <location>
        <begin position="616"/>
        <end position="626"/>
    </location>
</feature>
<feature type="compositionally biased region" description="Polar residues" evidence="5">
    <location>
        <begin position="636"/>
        <end position="647"/>
    </location>
</feature>
<feature type="compositionally biased region" description="Acidic residues" evidence="5">
    <location>
        <begin position="650"/>
        <end position="661"/>
    </location>
</feature>
<feature type="active site" description="Proton acceptor" evidence="2">
    <location>
        <position position="232"/>
    </location>
</feature>
<feature type="binding site" evidence="2">
    <location>
        <position position="186"/>
    </location>
    <ligand>
        <name>Zn(2+)</name>
        <dbReference type="ChEBI" id="CHEBI:29105"/>
        <label>1</label>
        <note>catalytic</note>
    </ligand>
</feature>
<feature type="binding site" evidence="2">
    <location>
        <position position="198"/>
    </location>
    <ligand>
        <name>Zn(2+)</name>
        <dbReference type="ChEBI" id="CHEBI:29105"/>
        <label>1</label>
        <note>catalytic</note>
    </ligand>
</feature>
<feature type="binding site" evidence="2">
    <location>
        <position position="198"/>
    </location>
    <ligand>
        <name>Zn(2+)</name>
        <dbReference type="ChEBI" id="CHEBI:29105"/>
        <label>2</label>
        <note>catalytic</note>
    </ligand>
</feature>
<feature type="binding site" evidence="2">
    <location>
        <position position="233"/>
    </location>
    <ligand>
        <name>Zn(2+)</name>
        <dbReference type="ChEBI" id="CHEBI:29105"/>
        <label>2</label>
        <note>catalytic</note>
    </ligand>
</feature>
<feature type="binding site" evidence="2">
    <location>
        <position position="258"/>
    </location>
    <ligand>
        <name>Zn(2+)</name>
        <dbReference type="ChEBI" id="CHEBI:29105"/>
        <label>1</label>
        <note>catalytic</note>
    </ligand>
</feature>
<feature type="binding site" evidence="2">
    <location>
        <position position="331"/>
    </location>
    <ligand>
        <name>Zn(2+)</name>
        <dbReference type="ChEBI" id="CHEBI:29105"/>
        <label>2</label>
        <note>catalytic</note>
    </ligand>
</feature>
<feature type="site" description="Transition state stabilizer" evidence="2">
    <location>
        <position position="330"/>
    </location>
</feature>
<feature type="glycosylation site" description="N-linked (GlcNAc...) asparagine" evidence="4">
    <location>
        <position position="48"/>
    </location>
</feature>
<feature type="glycosylation site" description="N-linked (GlcNAc...) asparagine" evidence="4">
    <location>
        <position position="117"/>
    </location>
</feature>
<feature type="glycosylation site" description="N-linked (GlcNAc...) asparagine" evidence="4">
    <location>
        <position position="120"/>
    </location>
</feature>
<feature type="glycosylation site" description="N-linked (GlcNAc...) asparagine" evidence="4">
    <location>
        <position position="129"/>
    </location>
</feature>
<feature type="glycosylation site" description="N-linked (GlcNAc...) asparagine" evidence="4">
    <location>
        <position position="900"/>
    </location>
</feature>
<gene>
    <name type="ORF">SMAC_04453</name>
</gene>
<evidence type="ECO:0000250" key="1">
    <source>
        <dbReference type="UniProtKB" id="P38244"/>
    </source>
</evidence>
<evidence type="ECO:0000250" key="2">
    <source>
        <dbReference type="UniProtKB" id="P80561"/>
    </source>
</evidence>
<evidence type="ECO:0000255" key="3"/>
<evidence type="ECO:0000255" key="4">
    <source>
        <dbReference type="PROSITE-ProRule" id="PRU00498"/>
    </source>
</evidence>
<evidence type="ECO:0000256" key="5">
    <source>
        <dbReference type="SAM" id="MobiDB-lite"/>
    </source>
</evidence>
<evidence type="ECO:0000305" key="6"/>
<sequence length="1040" mass="114823">MINPISFRPGPVTFWTTLIYLALLIPIVIINEEPPAAPKTAEPFKGVNLTEAWLDLTTITRAYHPYNSKFNEEVRRYLLEKVESILEENGATWVFDDQMAAAAKDGKSAAVTVFDDNVSNSTFVMGKSNGTTFTRTESINNAAYFEGTNILVYIRGKEDDDGDWWEADYVHGMRRNAKGLTLVNAHYDSVSTGFGATDDGMGVVTCLQVLKYFTTPGNQPQRGIVVMLNNGEEDWLYGARALGQHKLNPFIHTFLNVEGAGAGGRAIVFRATDREVMAAYARTSHPFGTVIASDAFGMGFISSGTDYSVLVDAYGQRGIDLAFFKPRARYHTNQDDTRHASKESLWHILSASIHTTKQLSGDTGNTFIGQRPDKAHGKVANGRPSNGVWFDLFGKSFVLFGLRGMFAWSLTLLIATPLILVGITWLLRNLDKDYFFTSTVKTKEHPEYEAVPIGGWKGFFRWAMMVSIFYFSFWMIMRGANFVRPSALHRGYANLWLFVFGWIVLVAVTALEDRRRIAAGYIFVFLESAIFLSCLISFVELLALPRKSAYALQVQEDYDGHDHSGYQGYRDSTDGLSSGARAESSASAGSPSSPTVAQEPSKPTAPAGTTNGLSTAPSVAAHSSQPQPAPATPTPGRSTSAPIPSTTPRDEDESEDDDDEATERTPLVGGNGTNDRGRTTFATTYRRSITALVHGARKMEEDGEPYEHEQDWSGHLPSWAWFFQFLLLGPFMIILAAQTGLMLTDAVYQTGSDGSKLFTPYLMIFFFTLLLILPLTPFIHRVTHHIPVFLLVVFIVTLTYNLIAFPFSANNRYKAFFGQYIDVATGENKVCYTGIEEYVRPIIAELPSASGRDVTCGKSLRRGSTIATCCFDGSAVPPKLGSEDLDGLPQDNYADIITVNATRSHKKGDSSRTTARIEITADNTKSCFLQFKKPVSALTIESGSGWDDRFGQYPEDGVGLVRLWHREFDKTWVVNAEWKGSETRKGDDENDGTVICMWSDANTPGTIPALDEALQFVPSWAAVTKFSEGLVEGRKAFKIV</sequence>
<dbReference type="EC" id="3.4.-.-" evidence="6"/>
<dbReference type="EMBL" id="CABT02000014">
    <property type="protein sequence ID" value="CCC10708.1"/>
    <property type="molecule type" value="Genomic_DNA"/>
</dbReference>
<dbReference type="RefSeq" id="XP_003343795.1">
    <property type="nucleotide sequence ID" value="XM_003343747.1"/>
</dbReference>
<dbReference type="SMR" id="D1ZV85"/>
<dbReference type="FunCoup" id="D1ZV85">
    <property type="interactions" value="5"/>
</dbReference>
<dbReference type="STRING" id="771870.D1ZV85"/>
<dbReference type="VEuPathDB" id="FungiDB:SMAC_04453"/>
<dbReference type="eggNOG" id="KOG2194">
    <property type="taxonomic scope" value="Eukaryota"/>
</dbReference>
<dbReference type="HOGENOM" id="CLU_006412_1_0_1"/>
<dbReference type="InParanoid" id="D1ZV85"/>
<dbReference type="OMA" id="FCHTFVN"/>
<dbReference type="OrthoDB" id="76293at2759"/>
<dbReference type="Proteomes" id="UP000001881">
    <property type="component" value="Unassembled WGS sequence"/>
</dbReference>
<dbReference type="GO" id="GO:0005774">
    <property type="term" value="C:vacuolar membrane"/>
    <property type="evidence" value="ECO:0007669"/>
    <property type="project" value="UniProtKB-SubCell"/>
</dbReference>
<dbReference type="GO" id="GO:0046872">
    <property type="term" value="F:metal ion binding"/>
    <property type="evidence" value="ECO:0007669"/>
    <property type="project" value="UniProtKB-KW"/>
</dbReference>
<dbReference type="GO" id="GO:0008235">
    <property type="term" value="F:metalloexopeptidase activity"/>
    <property type="evidence" value="ECO:0007669"/>
    <property type="project" value="InterPro"/>
</dbReference>
<dbReference type="GO" id="GO:0006508">
    <property type="term" value="P:proteolysis"/>
    <property type="evidence" value="ECO:0007669"/>
    <property type="project" value="UniProtKB-KW"/>
</dbReference>
<dbReference type="CDD" id="cd03875">
    <property type="entry name" value="M28_Fxna_like"/>
    <property type="match status" value="1"/>
</dbReference>
<dbReference type="FunFam" id="3.40.630.10:FF:000057">
    <property type="entry name" value="Vacuolar membrane protease"/>
    <property type="match status" value="1"/>
</dbReference>
<dbReference type="Gene3D" id="3.40.630.10">
    <property type="entry name" value="Zn peptidases"/>
    <property type="match status" value="1"/>
</dbReference>
<dbReference type="InterPro" id="IPR048024">
    <property type="entry name" value="Fxna-like_M28_dom"/>
</dbReference>
<dbReference type="InterPro" id="IPR045175">
    <property type="entry name" value="M28_fam"/>
</dbReference>
<dbReference type="InterPro" id="IPR007484">
    <property type="entry name" value="Peptidase_M28"/>
</dbReference>
<dbReference type="InterPro" id="IPR053975">
    <property type="entry name" value="PFF1_C"/>
</dbReference>
<dbReference type="InterPro" id="IPR053976">
    <property type="entry name" value="PFF1_TM"/>
</dbReference>
<dbReference type="PANTHER" id="PTHR12147">
    <property type="entry name" value="METALLOPEPTIDASE M28 FAMILY MEMBER"/>
    <property type="match status" value="1"/>
</dbReference>
<dbReference type="PANTHER" id="PTHR12147:SF58">
    <property type="entry name" value="VACUOLAR MEMBRANE PROTEASE"/>
    <property type="match status" value="1"/>
</dbReference>
<dbReference type="Pfam" id="PF04389">
    <property type="entry name" value="Peptidase_M28"/>
    <property type="match status" value="1"/>
</dbReference>
<dbReference type="Pfam" id="PF22250">
    <property type="entry name" value="PFF1_C"/>
    <property type="match status" value="1"/>
</dbReference>
<dbReference type="Pfam" id="PF22251">
    <property type="entry name" value="PFF1_TM"/>
    <property type="match status" value="2"/>
</dbReference>
<dbReference type="SUPFAM" id="SSF53187">
    <property type="entry name" value="Zn-dependent exopeptidases"/>
    <property type="match status" value="1"/>
</dbReference>
<proteinExistence type="inferred from homology"/>
<keyword id="KW-0325">Glycoprotein</keyword>
<keyword id="KW-0378">Hydrolase</keyword>
<keyword id="KW-0472">Membrane</keyword>
<keyword id="KW-0479">Metal-binding</keyword>
<keyword id="KW-0482">Metalloprotease</keyword>
<keyword id="KW-0645">Protease</keyword>
<keyword id="KW-1185">Reference proteome</keyword>
<keyword id="KW-0812">Transmembrane</keyword>
<keyword id="KW-1133">Transmembrane helix</keyword>
<keyword id="KW-0926">Vacuole</keyword>
<keyword id="KW-0862">Zinc</keyword>
<protein>
    <recommendedName>
        <fullName evidence="1">Vacuolar membrane protease</fullName>
        <ecNumber evidence="6">3.4.-.-</ecNumber>
    </recommendedName>
    <alternativeName>
        <fullName evidence="1">FXNA-related family protease 1</fullName>
    </alternativeName>
</protein>
<accession>D1ZV85</accession>
<accession>F7VYW2</accession>
<reference key="1">
    <citation type="journal article" date="2010" name="PLoS Genet.">
        <title>De novo assembly of a 40 Mb eukaryotic genome from short sequence reads: Sordaria macrospora, a model organism for fungal morphogenesis.</title>
        <authorList>
            <person name="Nowrousian M."/>
            <person name="Stajich J.E."/>
            <person name="Chu M."/>
            <person name="Engh I."/>
            <person name="Espagne E."/>
            <person name="Halliday K."/>
            <person name="Kamerewerd J."/>
            <person name="Kempken F."/>
            <person name="Knab B."/>
            <person name="Kuo H.-C."/>
            <person name="Osiewacz H.D."/>
            <person name="Poeggeler S."/>
            <person name="Read N.D."/>
            <person name="Seiler S."/>
            <person name="Smith K.M."/>
            <person name="Zickler D."/>
            <person name="Kueck U."/>
            <person name="Freitag M."/>
        </authorList>
    </citation>
    <scope>NUCLEOTIDE SEQUENCE [LARGE SCALE GENOMIC DNA]</scope>
    <source>
        <strain>ATCC MYA-333 / DSM 997 / K(L3346) / K-hell</strain>
    </source>
</reference>
<name>PFF1_SORMK</name>